<name>SYK_MYCGI</name>
<protein>
    <recommendedName>
        <fullName evidence="1">Lysine--tRNA ligase</fullName>
        <ecNumber evidence="1">6.1.1.6</ecNumber>
    </recommendedName>
    <alternativeName>
        <fullName evidence="1">Lysyl-tRNA synthetase</fullName>
        <shortName evidence="1">LysRS</shortName>
    </alternativeName>
</protein>
<gene>
    <name evidence="1" type="primary">lysS</name>
    <name type="ordered locus">Mflv_1428</name>
</gene>
<dbReference type="EC" id="6.1.1.6" evidence="1"/>
<dbReference type="EMBL" id="CP000656">
    <property type="protein sequence ID" value="ABP43910.1"/>
    <property type="molecule type" value="Genomic_DNA"/>
</dbReference>
<dbReference type="SMR" id="A4T5M9"/>
<dbReference type="STRING" id="350054.Mflv_1428"/>
<dbReference type="KEGG" id="mgi:Mflv_1428"/>
<dbReference type="eggNOG" id="COG1190">
    <property type="taxonomic scope" value="Bacteria"/>
</dbReference>
<dbReference type="HOGENOM" id="CLU_008255_6_0_11"/>
<dbReference type="OrthoDB" id="9801152at2"/>
<dbReference type="GO" id="GO:0005829">
    <property type="term" value="C:cytosol"/>
    <property type="evidence" value="ECO:0007669"/>
    <property type="project" value="TreeGrafter"/>
</dbReference>
<dbReference type="GO" id="GO:0005524">
    <property type="term" value="F:ATP binding"/>
    <property type="evidence" value="ECO:0007669"/>
    <property type="project" value="UniProtKB-UniRule"/>
</dbReference>
<dbReference type="GO" id="GO:0004824">
    <property type="term" value="F:lysine-tRNA ligase activity"/>
    <property type="evidence" value="ECO:0007669"/>
    <property type="project" value="UniProtKB-UniRule"/>
</dbReference>
<dbReference type="GO" id="GO:0000287">
    <property type="term" value="F:magnesium ion binding"/>
    <property type="evidence" value="ECO:0007669"/>
    <property type="project" value="UniProtKB-UniRule"/>
</dbReference>
<dbReference type="GO" id="GO:0000049">
    <property type="term" value="F:tRNA binding"/>
    <property type="evidence" value="ECO:0007669"/>
    <property type="project" value="TreeGrafter"/>
</dbReference>
<dbReference type="GO" id="GO:0006430">
    <property type="term" value="P:lysyl-tRNA aminoacylation"/>
    <property type="evidence" value="ECO:0007669"/>
    <property type="project" value="UniProtKB-UniRule"/>
</dbReference>
<dbReference type="CDD" id="cd04322">
    <property type="entry name" value="LysRS_N"/>
    <property type="match status" value="1"/>
</dbReference>
<dbReference type="FunFam" id="2.40.50.140:FF:000024">
    <property type="entry name" value="Lysine--tRNA ligase"/>
    <property type="match status" value="1"/>
</dbReference>
<dbReference type="Gene3D" id="3.30.930.10">
    <property type="entry name" value="Bira Bifunctional Protein, Domain 2"/>
    <property type="match status" value="1"/>
</dbReference>
<dbReference type="Gene3D" id="2.40.50.140">
    <property type="entry name" value="Nucleic acid-binding proteins"/>
    <property type="match status" value="1"/>
</dbReference>
<dbReference type="HAMAP" id="MF_00252">
    <property type="entry name" value="Lys_tRNA_synth_class2"/>
    <property type="match status" value="1"/>
</dbReference>
<dbReference type="InterPro" id="IPR004364">
    <property type="entry name" value="Aa-tRNA-synt_II"/>
</dbReference>
<dbReference type="InterPro" id="IPR006195">
    <property type="entry name" value="aa-tRNA-synth_II"/>
</dbReference>
<dbReference type="InterPro" id="IPR045864">
    <property type="entry name" value="aa-tRNA-synth_II/BPL/LPL"/>
</dbReference>
<dbReference type="InterPro" id="IPR002313">
    <property type="entry name" value="Lys-tRNA-ligase_II"/>
</dbReference>
<dbReference type="InterPro" id="IPR044136">
    <property type="entry name" value="Lys-tRNA-ligase_II_N"/>
</dbReference>
<dbReference type="InterPro" id="IPR018149">
    <property type="entry name" value="Lys-tRNA-synth_II_C"/>
</dbReference>
<dbReference type="InterPro" id="IPR012340">
    <property type="entry name" value="NA-bd_OB-fold"/>
</dbReference>
<dbReference type="InterPro" id="IPR004365">
    <property type="entry name" value="NA-bd_OB_tRNA"/>
</dbReference>
<dbReference type="NCBIfam" id="TIGR00499">
    <property type="entry name" value="lysS_bact"/>
    <property type="match status" value="1"/>
</dbReference>
<dbReference type="NCBIfam" id="NF001756">
    <property type="entry name" value="PRK00484.1"/>
    <property type="match status" value="1"/>
</dbReference>
<dbReference type="PANTHER" id="PTHR42918:SF15">
    <property type="entry name" value="LYSINE--TRNA LIGASE, CHLOROPLASTIC_MITOCHONDRIAL"/>
    <property type="match status" value="1"/>
</dbReference>
<dbReference type="PANTHER" id="PTHR42918">
    <property type="entry name" value="LYSYL-TRNA SYNTHETASE"/>
    <property type="match status" value="1"/>
</dbReference>
<dbReference type="Pfam" id="PF00152">
    <property type="entry name" value="tRNA-synt_2"/>
    <property type="match status" value="1"/>
</dbReference>
<dbReference type="Pfam" id="PF01336">
    <property type="entry name" value="tRNA_anti-codon"/>
    <property type="match status" value="1"/>
</dbReference>
<dbReference type="PRINTS" id="PR00982">
    <property type="entry name" value="TRNASYNTHLYS"/>
</dbReference>
<dbReference type="SUPFAM" id="SSF55681">
    <property type="entry name" value="Class II aaRS and biotin synthetases"/>
    <property type="match status" value="1"/>
</dbReference>
<dbReference type="SUPFAM" id="SSF50249">
    <property type="entry name" value="Nucleic acid-binding proteins"/>
    <property type="match status" value="1"/>
</dbReference>
<dbReference type="PROSITE" id="PS50862">
    <property type="entry name" value="AA_TRNA_LIGASE_II"/>
    <property type="match status" value="1"/>
</dbReference>
<reference key="1">
    <citation type="submission" date="2007-04" db="EMBL/GenBank/DDBJ databases">
        <title>Complete sequence of chromosome of Mycobacterium gilvum PYR-GCK.</title>
        <authorList>
            <consortium name="US DOE Joint Genome Institute"/>
            <person name="Copeland A."/>
            <person name="Lucas S."/>
            <person name="Lapidus A."/>
            <person name="Barry K."/>
            <person name="Detter J.C."/>
            <person name="Glavina del Rio T."/>
            <person name="Hammon N."/>
            <person name="Israni S."/>
            <person name="Dalin E."/>
            <person name="Tice H."/>
            <person name="Pitluck S."/>
            <person name="Chain P."/>
            <person name="Malfatti S."/>
            <person name="Shin M."/>
            <person name="Vergez L."/>
            <person name="Schmutz J."/>
            <person name="Larimer F."/>
            <person name="Land M."/>
            <person name="Hauser L."/>
            <person name="Kyrpides N."/>
            <person name="Mikhailova N."/>
            <person name="Miller C."/>
            <person name="Richardson P."/>
        </authorList>
    </citation>
    <scope>NUCLEOTIDE SEQUENCE [LARGE SCALE GENOMIC DNA]</scope>
    <source>
        <strain>PYR-GCK</strain>
    </source>
</reference>
<accession>A4T5M9</accession>
<evidence type="ECO:0000255" key="1">
    <source>
        <dbReference type="HAMAP-Rule" id="MF_00252"/>
    </source>
</evidence>
<keyword id="KW-0030">Aminoacyl-tRNA synthetase</keyword>
<keyword id="KW-0067">ATP-binding</keyword>
<keyword id="KW-0963">Cytoplasm</keyword>
<keyword id="KW-0436">Ligase</keyword>
<keyword id="KW-0460">Magnesium</keyword>
<keyword id="KW-0479">Metal-binding</keyword>
<keyword id="KW-0547">Nucleotide-binding</keyword>
<keyword id="KW-0648">Protein biosynthesis</keyword>
<comment type="catalytic activity">
    <reaction evidence="1">
        <text>tRNA(Lys) + L-lysine + ATP = L-lysyl-tRNA(Lys) + AMP + diphosphate</text>
        <dbReference type="Rhea" id="RHEA:20792"/>
        <dbReference type="Rhea" id="RHEA-COMP:9696"/>
        <dbReference type="Rhea" id="RHEA-COMP:9697"/>
        <dbReference type="ChEBI" id="CHEBI:30616"/>
        <dbReference type="ChEBI" id="CHEBI:32551"/>
        <dbReference type="ChEBI" id="CHEBI:33019"/>
        <dbReference type="ChEBI" id="CHEBI:78442"/>
        <dbReference type="ChEBI" id="CHEBI:78529"/>
        <dbReference type="ChEBI" id="CHEBI:456215"/>
        <dbReference type="EC" id="6.1.1.6"/>
    </reaction>
</comment>
<comment type="cofactor">
    <cofactor evidence="1">
        <name>Mg(2+)</name>
        <dbReference type="ChEBI" id="CHEBI:18420"/>
    </cofactor>
    <text evidence="1">Binds 3 Mg(2+) ions per subunit.</text>
</comment>
<comment type="subunit">
    <text evidence="1">Homodimer.</text>
</comment>
<comment type="subcellular location">
    <subcellularLocation>
        <location evidence="1">Cytoplasm</location>
    </subcellularLocation>
</comment>
<comment type="similarity">
    <text evidence="1">Belongs to the class-II aminoacyl-tRNA synthetase family.</text>
</comment>
<feature type="chain" id="PRO_1000125521" description="Lysine--tRNA ligase">
    <location>
        <begin position="1"/>
        <end position="501"/>
    </location>
</feature>
<feature type="binding site" evidence="1">
    <location>
        <position position="411"/>
    </location>
    <ligand>
        <name>Mg(2+)</name>
        <dbReference type="ChEBI" id="CHEBI:18420"/>
        <label>1</label>
    </ligand>
</feature>
<feature type="binding site" evidence="1">
    <location>
        <position position="418"/>
    </location>
    <ligand>
        <name>Mg(2+)</name>
        <dbReference type="ChEBI" id="CHEBI:18420"/>
        <label>1</label>
    </ligand>
</feature>
<feature type="binding site" evidence="1">
    <location>
        <position position="418"/>
    </location>
    <ligand>
        <name>Mg(2+)</name>
        <dbReference type="ChEBI" id="CHEBI:18420"/>
        <label>2</label>
    </ligand>
</feature>
<proteinExistence type="inferred from homology"/>
<organism>
    <name type="scientific">Mycolicibacterium gilvum (strain PYR-GCK)</name>
    <name type="common">Mycobacterium gilvum (strain PYR-GCK)</name>
    <dbReference type="NCBI Taxonomy" id="350054"/>
    <lineage>
        <taxon>Bacteria</taxon>
        <taxon>Bacillati</taxon>
        <taxon>Actinomycetota</taxon>
        <taxon>Actinomycetes</taxon>
        <taxon>Mycobacteriales</taxon>
        <taxon>Mycobacteriaceae</taxon>
        <taxon>Mycolicibacterium</taxon>
    </lineage>
</organism>
<sequence length="501" mass="56099">MTSPDSPDDIPEQFRIRQAKRERLLAEGREPYPVKVDRTHTLAELRQAYPDLEPDTKTGLKVGVAGRVIFARNSGKLCFATLQEGDGAQLQVMISFAEVGQESLDAWKADVDLGDIVFVHGEVISSRRGELSVLADSWQIVSKALRPLPVAHKELNEETRVRQRYVDLIVRPEARTIARQRIAVVRAVRSALERRGFLEVETPMLQTLAGGAAARPFVTHSNALDADLYLRIAPELFLKRCVVGGFDRVFELNRNFRNEGADSTHSPEFAMLETYQAYGTYDDSATVTRELIQEVADEAIGTRQVPLADGTEYDLDGEWQSLQMYPSLSEALGEEITPATPAEKLWQIADRLGVEIPRDRGYGHGKLVEELWEFTVGDTLWAPTFVRDFPVETTPLTRPHRSIEGVTEKWDLYVRKFELATGYSELIDPIIQRERFEAQARAAAAGDDEAMALDEDFLAALEYGMPPTTGTGMGIDRLLMALTGLSIRETVLFPIVRRHSN</sequence>